<reference key="1">
    <citation type="journal article" date="2006" name="PLoS Biol.">
        <title>The genome of deep-sea vent chemolithoautotroph Thiomicrospira crunogena XCL-2.</title>
        <authorList>
            <person name="Scott K.M."/>
            <person name="Sievert S.M."/>
            <person name="Abril F.N."/>
            <person name="Ball L.A."/>
            <person name="Barrett C.J."/>
            <person name="Blake R.A."/>
            <person name="Boller A.J."/>
            <person name="Chain P.S.G."/>
            <person name="Clark J.A."/>
            <person name="Davis C.R."/>
            <person name="Detter C."/>
            <person name="Do K.F."/>
            <person name="Dobrinski K.P."/>
            <person name="Faza B.I."/>
            <person name="Fitzpatrick K.A."/>
            <person name="Freyermuth S.K."/>
            <person name="Harmer T.L."/>
            <person name="Hauser L.J."/>
            <person name="Huegler M."/>
            <person name="Kerfeld C.A."/>
            <person name="Klotz M.G."/>
            <person name="Kong W.W."/>
            <person name="Land M."/>
            <person name="Lapidus A."/>
            <person name="Larimer F.W."/>
            <person name="Longo D.L."/>
            <person name="Lucas S."/>
            <person name="Malfatti S.A."/>
            <person name="Massey S.E."/>
            <person name="Martin D.D."/>
            <person name="McCuddin Z."/>
            <person name="Meyer F."/>
            <person name="Moore J.L."/>
            <person name="Ocampo L.H. Jr."/>
            <person name="Paul J.H."/>
            <person name="Paulsen I.T."/>
            <person name="Reep D.K."/>
            <person name="Ren Q."/>
            <person name="Ross R.L."/>
            <person name="Sato P.Y."/>
            <person name="Thomas P."/>
            <person name="Tinkham L.E."/>
            <person name="Zeruth G.T."/>
        </authorList>
    </citation>
    <scope>NUCLEOTIDE SEQUENCE [LARGE SCALE GENOMIC DNA]</scope>
    <source>
        <strain>DSM 25203 / XCL-2</strain>
    </source>
</reference>
<name>PROB_HYDCU</name>
<sequence length="376" mass="40662">MLTRSDIHQKSRRWVVKIGSALLTNDGRGLNKDAMAQWVSQMVTLRQQGIELVIVSSGSVAEGMQRLGWSQRPSELNELQAAAAVGQMGLVQAYESEFAKNGIHTAQILMTHDDLSNRARYLNASNTIQTLLEHGVVPVINENDTVVTDEIRFGDNDTLAALTANLVSADVLVILTDQNGLYNDNPRTNPNAELISEAQVSRKDIEAMASSEGGSLGKGGMYTKVMAAKRAARSGTATFIASGREDNVLPRLLAGEPLGTLLIPDLEPLTAKKRWLAGHLQAKGQLVLDEGAVKALQSSGKSLLPIGVKGMSGEFQRGEMVVCVNENNQEVARGLVNYPFFETQKIMGHPSSEINQLLGYSDGEFLIHCDNLVLAD</sequence>
<gene>
    <name evidence="1" type="primary">proB</name>
    <name type="ordered locus">Tcr_0344</name>
</gene>
<comment type="function">
    <text evidence="1">Catalyzes the transfer of a phosphate group to glutamate to form L-glutamate 5-phosphate.</text>
</comment>
<comment type="catalytic activity">
    <reaction evidence="1">
        <text>L-glutamate + ATP = L-glutamyl 5-phosphate + ADP</text>
        <dbReference type="Rhea" id="RHEA:14877"/>
        <dbReference type="ChEBI" id="CHEBI:29985"/>
        <dbReference type="ChEBI" id="CHEBI:30616"/>
        <dbReference type="ChEBI" id="CHEBI:58274"/>
        <dbReference type="ChEBI" id="CHEBI:456216"/>
        <dbReference type="EC" id="2.7.2.11"/>
    </reaction>
</comment>
<comment type="pathway">
    <text evidence="1">Amino-acid biosynthesis; L-proline biosynthesis; L-glutamate 5-semialdehyde from L-glutamate: step 1/2.</text>
</comment>
<comment type="subcellular location">
    <subcellularLocation>
        <location evidence="1">Cytoplasm</location>
    </subcellularLocation>
</comment>
<comment type="similarity">
    <text evidence="1">Belongs to the glutamate 5-kinase family.</text>
</comment>
<feature type="chain" id="PRO_0000230072" description="Glutamate 5-kinase">
    <location>
        <begin position="1"/>
        <end position="376"/>
    </location>
</feature>
<feature type="domain" description="PUA" evidence="1">
    <location>
        <begin position="283"/>
        <end position="361"/>
    </location>
</feature>
<feature type="binding site" evidence="1">
    <location>
        <position position="17"/>
    </location>
    <ligand>
        <name>ATP</name>
        <dbReference type="ChEBI" id="CHEBI:30616"/>
    </ligand>
</feature>
<feature type="binding site" evidence="1">
    <location>
        <position position="57"/>
    </location>
    <ligand>
        <name>substrate</name>
    </ligand>
</feature>
<feature type="binding site" evidence="1">
    <location>
        <position position="144"/>
    </location>
    <ligand>
        <name>substrate</name>
    </ligand>
</feature>
<feature type="binding site" evidence="1">
    <location>
        <position position="156"/>
    </location>
    <ligand>
        <name>substrate</name>
    </ligand>
</feature>
<feature type="binding site" evidence="1">
    <location>
        <begin position="176"/>
        <end position="177"/>
    </location>
    <ligand>
        <name>ATP</name>
        <dbReference type="ChEBI" id="CHEBI:30616"/>
    </ligand>
</feature>
<accession>Q31IT3</accession>
<protein>
    <recommendedName>
        <fullName evidence="1">Glutamate 5-kinase</fullName>
        <ecNumber evidence="1">2.7.2.11</ecNumber>
    </recommendedName>
    <alternativeName>
        <fullName evidence="1">Gamma-glutamyl kinase</fullName>
        <shortName evidence="1">GK</shortName>
    </alternativeName>
</protein>
<organism>
    <name type="scientific">Hydrogenovibrio crunogenus (strain DSM 25203 / XCL-2)</name>
    <name type="common">Thiomicrospira crunogena</name>
    <dbReference type="NCBI Taxonomy" id="317025"/>
    <lineage>
        <taxon>Bacteria</taxon>
        <taxon>Pseudomonadati</taxon>
        <taxon>Pseudomonadota</taxon>
        <taxon>Gammaproteobacteria</taxon>
        <taxon>Thiotrichales</taxon>
        <taxon>Piscirickettsiaceae</taxon>
        <taxon>Hydrogenovibrio</taxon>
    </lineage>
</organism>
<keyword id="KW-0028">Amino-acid biosynthesis</keyword>
<keyword id="KW-0067">ATP-binding</keyword>
<keyword id="KW-0963">Cytoplasm</keyword>
<keyword id="KW-0418">Kinase</keyword>
<keyword id="KW-0547">Nucleotide-binding</keyword>
<keyword id="KW-0641">Proline biosynthesis</keyword>
<keyword id="KW-0808">Transferase</keyword>
<proteinExistence type="inferred from homology"/>
<evidence type="ECO:0000255" key="1">
    <source>
        <dbReference type="HAMAP-Rule" id="MF_00456"/>
    </source>
</evidence>
<dbReference type="EC" id="2.7.2.11" evidence="1"/>
<dbReference type="EMBL" id="CP000109">
    <property type="protein sequence ID" value="ABB40940.1"/>
    <property type="molecule type" value="Genomic_DNA"/>
</dbReference>
<dbReference type="SMR" id="Q31IT3"/>
<dbReference type="STRING" id="317025.Tcr_0344"/>
<dbReference type="KEGG" id="tcx:Tcr_0344"/>
<dbReference type="eggNOG" id="COG0263">
    <property type="taxonomic scope" value="Bacteria"/>
</dbReference>
<dbReference type="HOGENOM" id="CLU_025400_2_0_6"/>
<dbReference type="OrthoDB" id="9804434at2"/>
<dbReference type="UniPathway" id="UPA00098">
    <property type="reaction ID" value="UER00359"/>
</dbReference>
<dbReference type="GO" id="GO:0005829">
    <property type="term" value="C:cytosol"/>
    <property type="evidence" value="ECO:0007669"/>
    <property type="project" value="TreeGrafter"/>
</dbReference>
<dbReference type="GO" id="GO:0005524">
    <property type="term" value="F:ATP binding"/>
    <property type="evidence" value="ECO:0007669"/>
    <property type="project" value="UniProtKB-KW"/>
</dbReference>
<dbReference type="GO" id="GO:0004349">
    <property type="term" value="F:glutamate 5-kinase activity"/>
    <property type="evidence" value="ECO:0007669"/>
    <property type="project" value="UniProtKB-UniRule"/>
</dbReference>
<dbReference type="GO" id="GO:0003723">
    <property type="term" value="F:RNA binding"/>
    <property type="evidence" value="ECO:0007669"/>
    <property type="project" value="InterPro"/>
</dbReference>
<dbReference type="GO" id="GO:0055129">
    <property type="term" value="P:L-proline biosynthetic process"/>
    <property type="evidence" value="ECO:0007669"/>
    <property type="project" value="UniProtKB-UniRule"/>
</dbReference>
<dbReference type="CDD" id="cd04242">
    <property type="entry name" value="AAK_G5K_ProB"/>
    <property type="match status" value="1"/>
</dbReference>
<dbReference type="CDD" id="cd21157">
    <property type="entry name" value="PUA_G5K"/>
    <property type="match status" value="1"/>
</dbReference>
<dbReference type="FunFam" id="2.30.130.10:FF:000007">
    <property type="entry name" value="Glutamate 5-kinase"/>
    <property type="match status" value="1"/>
</dbReference>
<dbReference type="FunFam" id="3.40.1160.10:FF:000018">
    <property type="entry name" value="Glutamate 5-kinase"/>
    <property type="match status" value="1"/>
</dbReference>
<dbReference type="Gene3D" id="3.40.1160.10">
    <property type="entry name" value="Acetylglutamate kinase-like"/>
    <property type="match status" value="1"/>
</dbReference>
<dbReference type="Gene3D" id="2.30.130.10">
    <property type="entry name" value="PUA domain"/>
    <property type="match status" value="1"/>
</dbReference>
<dbReference type="HAMAP" id="MF_00456">
    <property type="entry name" value="ProB"/>
    <property type="match status" value="1"/>
</dbReference>
<dbReference type="InterPro" id="IPR036393">
    <property type="entry name" value="AceGlu_kinase-like_sf"/>
</dbReference>
<dbReference type="InterPro" id="IPR001048">
    <property type="entry name" value="Asp/Glu/Uridylate_kinase"/>
</dbReference>
<dbReference type="InterPro" id="IPR041739">
    <property type="entry name" value="G5K_ProB"/>
</dbReference>
<dbReference type="InterPro" id="IPR001057">
    <property type="entry name" value="Glu/AcGlu_kinase"/>
</dbReference>
<dbReference type="InterPro" id="IPR011529">
    <property type="entry name" value="Glu_5kinase"/>
</dbReference>
<dbReference type="InterPro" id="IPR005715">
    <property type="entry name" value="Glu_5kinase/COase_Synthase"/>
</dbReference>
<dbReference type="InterPro" id="IPR019797">
    <property type="entry name" value="Glutamate_5-kinase_CS"/>
</dbReference>
<dbReference type="InterPro" id="IPR002478">
    <property type="entry name" value="PUA"/>
</dbReference>
<dbReference type="InterPro" id="IPR015947">
    <property type="entry name" value="PUA-like_sf"/>
</dbReference>
<dbReference type="InterPro" id="IPR036974">
    <property type="entry name" value="PUA_sf"/>
</dbReference>
<dbReference type="NCBIfam" id="TIGR01027">
    <property type="entry name" value="proB"/>
    <property type="match status" value="1"/>
</dbReference>
<dbReference type="PANTHER" id="PTHR43654">
    <property type="entry name" value="GLUTAMATE 5-KINASE"/>
    <property type="match status" value="1"/>
</dbReference>
<dbReference type="PANTHER" id="PTHR43654:SF1">
    <property type="entry name" value="ISOPENTENYL PHOSPHATE KINASE"/>
    <property type="match status" value="1"/>
</dbReference>
<dbReference type="Pfam" id="PF00696">
    <property type="entry name" value="AA_kinase"/>
    <property type="match status" value="1"/>
</dbReference>
<dbReference type="Pfam" id="PF01472">
    <property type="entry name" value="PUA"/>
    <property type="match status" value="1"/>
</dbReference>
<dbReference type="PIRSF" id="PIRSF000729">
    <property type="entry name" value="GK"/>
    <property type="match status" value="1"/>
</dbReference>
<dbReference type="PRINTS" id="PR00474">
    <property type="entry name" value="GLU5KINASE"/>
</dbReference>
<dbReference type="SMART" id="SM00359">
    <property type="entry name" value="PUA"/>
    <property type="match status" value="1"/>
</dbReference>
<dbReference type="SUPFAM" id="SSF53633">
    <property type="entry name" value="Carbamate kinase-like"/>
    <property type="match status" value="1"/>
</dbReference>
<dbReference type="SUPFAM" id="SSF88697">
    <property type="entry name" value="PUA domain-like"/>
    <property type="match status" value="1"/>
</dbReference>
<dbReference type="PROSITE" id="PS00902">
    <property type="entry name" value="GLUTAMATE_5_KINASE"/>
    <property type="match status" value="1"/>
</dbReference>
<dbReference type="PROSITE" id="PS50890">
    <property type="entry name" value="PUA"/>
    <property type="match status" value="1"/>
</dbReference>